<keyword id="KW-0067">ATP-binding</keyword>
<keyword id="KW-0997">Cell inner membrane</keyword>
<keyword id="KW-1003">Cell membrane</keyword>
<keyword id="KW-0418">Kinase</keyword>
<keyword id="KW-0472">Membrane</keyword>
<keyword id="KW-0547">Nucleotide-binding</keyword>
<keyword id="KW-1185">Reference proteome</keyword>
<keyword id="KW-0808">Transferase</keyword>
<keyword id="KW-0812">Transmembrane</keyword>
<keyword id="KW-1133">Transmembrane helix</keyword>
<keyword id="KW-0831">Ubiquinone biosynthesis</keyword>
<dbReference type="EC" id="2.7.-.-" evidence="1"/>
<dbReference type="EMBL" id="CP000462">
    <property type="protein sequence ID" value="ABK38880.1"/>
    <property type="molecule type" value="Genomic_DNA"/>
</dbReference>
<dbReference type="RefSeq" id="WP_011704118.1">
    <property type="nucleotide sequence ID" value="NC_008570.1"/>
</dbReference>
<dbReference type="RefSeq" id="YP_854608.1">
    <property type="nucleotide sequence ID" value="NC_008570.1"/>
</dbReference>
<dbReference type="SMR" id="A0KEF8"/>
<dbReference type="STRING" id="380703.AHA_0086"/>
<dbReference type="EnsemblBacteria" id="ABK38880">
    <property type="protein sequence ID" value="ABK38880"/>
    <property type="gene ID" value="AHA_0086"/>
</dbReference>
<dbReference type="GeneID" id="4490981"/>
<dbReference type="KEGG" id="aha:AHA_0086"/>
<dbReference type="PATRIC" id="fig|380703.7.peg.77"/>
<dbReference type="eggNOG" id="COG0661">
    <property type="taxonomic scope" value="Bacteria"/>
</dbReference>
<dbReference type="HOGENOM" id="CLU_006533_0_0_6"/>
<dbReference type="OrthoDB" id="9795390at2"/>
<dbReference type="UniPathway" id="UPA00232"/>
<dbReference type="Proteomes" id="UP000000756">
    <property type="component" value="Chromosome"/>
</dbReference>
<dbReference type="GO" id="GO:0005886">
    <property type="term" value="C:plasma membrane"/>
    <property type="evidence" value="ECO:0007669"/>
    <property type="project" value="UniProtKB-SubCell"/>
</dbReference>
<dbReference type="GO" id="GO:0005524">
    <property type="term" value="F:ATP binding"/>
    <property type="evidence" value="ECO:0007669"/>
    <property type="project" value="UniProtKB-KW"/>
</dbReference>
<dbReference type="GO" id="GO:0004672">
    <property type="term" value="F:protein kinase activity"/>
    <property type="evidence" value="ECO:0007669"/>
    <property type="project" value="UniProtKB-UniRule"/>
</dbReference>
<dbReference type="GO" id="GO:0010795">
    <property type="term" value="P:regulation of ubiquinone biosynthetic process"/>
    <property type="evidence" value="ECO:0007669"/>
    <property type="project" value="UniProtKB-UniRule"/>
</dbReference>
<dbReference type="GO" id="GO:0006744">
    <property type="term" value="P:ubiquinone biosynthetic process"/>
    <property type="evidence" value="ECO:0007669"/>
    <property type="project" value="UniProtKB-UniPathway"/>
</dbReference>
<dbReference type="CDD" id="cd13972">
    <property type="entry name" value="UbiB"/>
    <property type="match status" value="1"/>
</dbReference>
<dbReference type="HAMAP" id="MF_00414">
    <property type="entry name" value="UbiB"/>
    <property type="match status" value="1"/>
</dbReference>
<dbReference type="InterPro" id="IPR004147">
    <property type="entry name" value="ABC1_dom"/>
</dbReference>
<dbReference type="InterPro" id="IPR011009">
    <property type="entry name" value="Kinase-like_dom_sf"/>
</dbReference>
<dbReference type="InterPro" id="IPR010232">
    <property type="entry name" value="UbiB"/>
</dbReference>
<dbReference type="InterPro" id="IPR045308">
    <property type="entry name" value="UbiB_bact"/>
</dbReference>
<dbReference type="InterPro" id="IPR050154">
    <property type="entry name" value="UbiB_kinase"/>
</dbReference>
<dbReference type="NCBIfam" id="NF003404">
    <property type="entry name" value="PRK04750.1"/>
    <property type="match status" value="1"/>
</dbReference>
<dbReference type="NCBIfam" id="TIGR01982">
    <property type="entry name" value="UbiB"/>
    <property type="match status" value="1"/>
</dbReference>
<dbReference type="PANTHER" id="PTHR10566">
    <property type="entry name" value="CHAPERONE-ACTIVITY OF BC1 COMPLEX CABC1 -RELATED"/>
    <property type="match status" value="1"/>
</dbReference>
<dbReference type="PANTHER" id="PTHR10566:SF113">
    <property type="entry name" value="PROTEIN ACTIVITY OF BC1 COMPLEX KINASE 7, CHLOROPLASTIC"/>
    <property type="match status" value="1"/>
</dbReference>
<dbReference type="Pfam" id="PF03109">
    <property type="entry name" value="ABC1"/>
    <property type="match status" value="1"/>
</dbReference>
<dbReference type="SUPFAM" id="SSF56112">
    <property type="entry name" value="Protein kinase-like (PK-like)"/>
    <property type="match status" value="1"/>
</dbReference>
<accession>A0KEF8</accession>
<feature type="chain" id="PRO_1000050036" description="Probable protein kinase UbiB">
    <location>
        <begin position="1"/>
        <end position="546"/>
    </location>
</feature>
<feature type="transmembrane region" description="Helical" evidence="1">
    <location>
        <begin position="498"/>
        <end position="517"/>
    </location>
</feature>
<feature type="transmembrane region" description="Helical" evidence="1">
    <location>
        <begin position="522"/>
        <end position="541"/>
    </location>
</feature>
<feature type="domain" description="Protein kinase" evidence="1">
    <location>
        <begin position="123"/>
        <end position="501"/>
    </location>
</feature>
<feature type="active site" description="Proton acceptor" evidence="1">
    <location>
        <position position="287"/>
    </location>
</feature>
<feature type="binding site" evidence="1">
    <location>
        <begin position="129"/>
        <end position="137"/>
    </location>
    <ligand>
        <name>ATP</name>
        <dbReference type="ChEBI" id="CHEBI:30616"/>
    </ligand>
</feature>
<feature type="binding site" evidence="1">
    <location>
        <position position="152"/>
    </location>
    <ligand>
        <name>ATP</name>
        <dbReference type="ChEBI" id="CHEBI:30616"/>
    </ligand>
</feature>
<reference key="1">
    <citation type="journal article" date="2006" name="J. Bacteriol.">
        <title>Genome sequence of Aeromonas hydrophila ATCC 7966T: jack of all trades.</title>
        <authorList>
            <person name="Seshadri R."/>
            <person name="Joseph S.W."/>
            <person name="Chopra A.K."/>
            <person name="Sha J."/>
            <person name="Shaw J."/>
            <person name="Graf J."/>
            <person name="Haft D.H."/>
            <person name="Wu M."/>
            <person name="Ren Q."/>
            <person name="Rosovitz M.J."/>
            <person name="Madupu R."/>
            <person name="Tallon L."/>
            <person name="Kim M."/>
            <person name="Jin S."/>
            <person name="Vuong H."/>
            <person name="Stine O.C."/>
            <person name="Ali A."/>
            <person name="Horneman A.J."/>
            <person name="Heidelberg J.F."/>
        </authorList>
    </citation>
    <scope>NUCLEOTIDE SEQUENCE [LARGE SCALE GENOMIC DNA]</scope>
    <source>
        <strain>ATCC 7966 / DSM 30187 / BCRC 13018 / CCUG 14551 / JCM 1027 / KCTC 2358 / NCIMB 9240 / NCTC 8049</strain>
    </source>
</reference>
<protein>
    <recommendedName>
        <fullName evidence="1">Probable protein kinase UbiB</fullName>
        <ecNumber evidence="1">2.7.-.-</ecNumber>
    </recommendedName>
    <alternativeName>
        <fullName evidence="1">Ubiquinone biosynthesis protein UbiB</fullName>
    </alternativeName>
</protein>
<evidence type="ECO:0000255" key="1">
    <source>
        <dbReference type="HAMAP-Rule" id="MF_00414"/>
    </source>
</evidence>
<name>UBIB_AERHH</name>
<organism>
    <name type="scientific">Aeromonas hydrophila subsp. hydrophila (strain ATCC 7966 / DSM 30187 / BCRC 13018 / CCUG 14551 / JCM 1027 / KCTC 2358 / NCIMB 9240 / NCTC 8049)</name>
    <dbReference type="NCBI Taxonomy" id="380703"/>
    <lineage>
        <taxon>Bacteria</taxon>
        <taxon>Pseudomonadati</taxon>
        <taxon>Pseudomonadota</taxon>
        <taxon>Gammaproteobacteria</taxon>
        <taxon>Aeromonadales</taxon>
        <taxon>Aeromonadaceae</taxon>
        <taxon>Aeromonas</taxon>
    </lineage>
</organism>
<comment type="function">
    <text evidence="1">Is probably a protein kinase regulator of UbiI activity which is involved in aerobic coenzyme Q (ubiquinone) biosynthesis.</text>
</comment>
<comment type="pathway">
    <text>Cofactor biosynthesis; ubiquinone biosynthesis [regulation].</text>
</comment>
<comment type="subcellular location">
    <subcellularLocation>
        <location evidence="1">Cell inner membrane</location>
        <topology evidence="1">Multi-pass membrane protein</topology>
    </subcellularLocation>
</comment>
<comment type="similarity">
    <text evidence="1">Belongs to the ABC1 family. UbiB subfamily.</text>
</comment>
<sequence>MTPKEFKRLYRIISILLEQGIDELVPARYQPWPGRLARRSLFWLKNKRQGLNRGARIRLAFEALGPIFIKFGQMLSTRRDLLPPDIAEELALLQDRVPPFCGQAARRQIEASLGCTIETLFDDFDETPLASASIAQVHTARLKENGREIVIKVIRPDIEPVIEADLRLMQALARLVARFVPQSGRLRPIEVVEEYRKTILDELNLMREAANAIQLRRNFTGSEALYVPEVFTEHCREQVLVMERIYGIPVSDIAALEANGTNMKLLAERGVEVFFTQVFRDSFFHADMHPGNIFVSYEHPENPLWIGIDCGIVGTLNREDKRYLAENFLAFFNRDYRRVAELHVESGWVPPDTKVDEFEFAIRTVLEPIFEKPLSEISFGHVLLNLFNTARRFNMQVQPQLVLLQKTLLYVEGLGRQLYPQLDLWQTAKPYLENWMYQQVGPKAVWNAIKEKAPFWAEKLPELPELVYETLRQTRHQQRHFDQMFADFRRHSRRQGQARYLLGVGASLLLAGVFLLTQKQHIEWGQISLAGAGLCWLLGWLRTRSH</sequence>
<proteinExistence type="inferred from homology"/>
<gene>
    <name evidence="1" type="primary">ubiB</name>
    <name type="ordered locus">AHA_0086</name>
</gene>